<reference key="1">
    <citation type="journal article" date="1999" name="Plasmid">
        <title>Characterization of cryptic plasmids pDP1 and pSMB1 of Streptococcus pneumoniae.</title>
        <authorList>
            <person name="Oggioni M.R."/>
            <person name="Iannelli F."/>
            <person name="Pozzi G."/>
        </authorList>
    </citation>
    <scope>NUCLEOTIDE SEQUENCE [LARGE SCALE GENOMIC DNA]</scope>
    <source>
        <strain>D39 / NCTC 7466</strain>
    </source>
</reference>
<comment type="function">
    <text>Produces a single-strand nick in a specific site of the plasmid, and this nick results in single-strand replication by rolling circle mechanism.</text>
</comment>
<comment type="similarity">
    <text evidence="1">Belongs to the Gram-positive plasmids replication protein type 1 family.</text>
</comment>
<protein>
    <recommendedName>
        <fullName>Protein rep</fullName>
    </recommendedName>
    <alternativeName>
        <fullName>Replication protein</fullName>
    </alternativeName>
</protein>
<evidence type="ECO:0000305" key="1"/>
<geneLocation type="plasmid">
    <name>pDP1</name>
</geneLocation>
<feature type="chain" id="PRO_0000275929" description="Protein rep">
    <location>
        <begin position="1"/>
        <end position="320"/>
    </location>
</feature>
<proteinExistence type="inferred from homology"/>
<organism>
    <name type="scientific">Streptococcus pneumoniae serotype 2 (strain D39 / NCTC 7466)</name>
    <dbReference type="NCBI Taxonomy" id="373153"/>
    <lineage>
        <taxon>Bacteria</taxon>
        <taxon>Bacillati</taxon>
        <taxon>Bacillota</taxon>
        <taxon>Bacilli</taxon>
        <taxon>Lactobacillales</taxon>
        <taxon>Streptococcaceae</taxon>
        <taxon>Streptococcus</taxon>
    </lineage>
</organism>
<gene>
    <name type="primary">rep</name>
    <name type="ordered locus">SPD_2300</name>
</gene>
<keyword id="KW-0235">DNA replication</keyword>
<keyword id="KW-0614">Plasmid</keyword>
<keyword id="KW-1185">Reference proteome</keyword>
<name>REP_STRP2</name>
<dbReference type="EMBL" id="AF047696">
    <property type="protein sequence ID" value="AAD12155.1"/>
    <property type="molecule type" value="Genomic_DNA"/>
</dbReference>
<dbReference type="RefSeq" id="NP_863586.1">
    <property type="nucleotide sequence ID" value="NC_005022.1"/>
</dbReference>
<dbReference type="RefSeq" id="WP_011117663.1">
    <property type="nucleotide sequence ID" value="NC_005022.1"/>
</dbReference>
<dbReference type="Proteomes" id="UP000001452">
    <property type="component" value="Plasmid pDP1"/>
</dbReference>
<dbReference type="GO" id="GO:0003677">
    <property type="term" value="F:DNA binding"/>
    <property type="evidence" value="ECO:0007669"/>
    <property type="project" value="InterPro"/>
</dbReference>
<dbReference type="GO" id="GO:0006260">
    <property type="term" value="P:DNA replication"/>
    <property type="evidence" value="ECO:0007669"/>
    <property type="project" value="UniProtKB-KW"/>
</dbReference>
<dbReference type="InterPro" id="IPR000989">
    <property type="entry name" value="Rep"/>
</dbReference>
<dbReference type="Pfam" id="PF01446">
    <property type="entry name" value="Rep_1"/>
    <property type="match status" value="1"/>
</dbReference>
<sequence>MEKWENQDKILLDKNKRGKDRNWRGRKLLSLKLADIFKELGYRETLIERVETCGDTLRFIRREDGSLRLYQAYFCKNKLCPMCNWRRSMKYSYQTSQIVDEAIKEQPKGRFLFLTLTVKNVPGKELNATISQLTQSFDRLFRRAKVKKNLIGFLRSVEVTHNQEEETYHPHIHVLMMVKSSYFSGAGDNYVSQEEWGRMWEQSLKVDYVPMVDIRSVKEIGKGLKGAILETAKYPIKPIKLDVENKQVVGDLYNGLYRKRQLGYGGLFKEIRKRLQLSNVENGDLVYTSDDNDEMSKGTKIVAIWNATKQNYFVKNKGWN</sequence>
<accession>O52776</accession>